<reference key="1">
    <citation type="journal article" date="2009" name="Genome Biol.">
        <title>Genomic and genetic analyses of diversity and plant interactions of Pseudomonas fluorescens.</title>
        <authorList>
            <person name="Silby M.W."/>
            <person name="Cerdeno-Tarraga A.M."/>
            <person name="Vernikos G.S."/>
            <person name="Giddens S.R."/>
            <person name="Jackson R.W."/>
            <person name="Preston G.M."/>
            <person name="Zhang X.-X."/>
            <person name="Moon C.D."/>
            <person name="Gehrig S.M."/>
            <person name="Godfrey S.A.C."/>
            <person name="Knight C.G."/>
            <person name="Malone J.G."/>
            <person name="Robinson Z."/>
            <person name="Spiers A.J."/>
            <person name="Harris S."/>
            <person name="Challis G.L."/>
            <person name="Yaxley A.M."/>
            <person name="Harris D."/>
            <person name="Seeger K."/>
            <person name="Murphy L."/>
            <person name="Rutter S."/>
            <person name="Squares R."/>
            <person name="Quail M.A."/>
            <person name="Saunders E."/>
            <person name="Mavromatis K."/>
            <person name="Brettin T.S."/>
            <person name="Bentley S.D."/>
            <person name="Hothersall J."/>
            <person name="Stephens E."/>
            <person name="Thomas C.M."/>
            <person name="Parkhill J."/>
            <person name="Levy S.B."/>
            <person name="Rainey P.B."/>
            <person name="Thomson N.R."/>
        </authorList>
    </citation>
    <scope>NUCLEOTIDE SEQUENCE [LARGE SCALE GENOMIC DNA]</scope>
    <source>
        <strain>Pf0-1</strain>
    </source>
</reference>
<name>COQ7_PSEPF</name>
<accession>Q3K5V9</accession>
<protein>
    <recommendedName>
        <fullName evidence="1">3-demethoxyubiquinol 3-hydroxylase</fullName>
        <shortName evidence="1">DMQ hydroxylase</shortName>
        <ecNumber evidence="1">1.14.99.60</ecNumber>
    </recommendedName>
    <alternativeName>
        <fullName evidence="1">2-nonaprenyl-3-methyl-6-methoxy-1,4-benzoquinol hydroxylase</fullName>
    </alternativeName>
</protein>
<evidence type="ECO:0000255" key="1">
    <source>
        <dbReference type="HAMAP-Rule" id="MF_01658"/>
    </source>
</evidence>
<feature type="chain" id="PRO_0000338712" description="3-demethoxyubiquinol 3-hydroxylase">
    <location>
        <begin position="1"/>
        <end position="215"/>
    </location>
</feature>
<feature type="binding site" evidence="1">
    <location>
        <position position="64"/>
    </location>
    <ligand>
        <name>Fe cation</name>
        <dbReference type="ChEBI" id="CHEBI:24875"/>
        <label>1</label>
    </ligand>
</feature>
<feature type="binding site" evidence="1">
    <location>
        <position position="94"/>
    </location>
    <ligand>
        <name>Fe cation</name>
        <dbReference type="ChEBI" id="CHEBI:24875"/>
        <label>1</label>
    </ligand>
</feature>
<feature type="binding site" evidence="1">
    <location>
        <position position="94"/>
    </location>
    <ligand>
        <name>Fe cation</name>
        <dbReference type="ChEBI" id="CHEBI:24875"/>
        <label>2</label>
    </ligand>
</feature>
<feature type="binding site" evidence="1">
    <location>
        <position position="97"/>
    </location>
    <ligand>
        <name>Fe cation</name>
        <dbReference type="ChEBI" id="CHEBI:24875"/>
        <label>1</label>
    </ligand>
</feature>
<feature type="binding site" evidence="1">
    <location>
        <position position="146"/>
    </location>
    <ligand>
        <name>Fe cation</name>
        <dbReference type="ChEBI" id="CHEBI:24875"/>
        <label>2</label>
    </ligand>
</feature>
<feature type="binding site" evidence="1">
    <location>
        <position position="178"/>
    </location>
    <ligand>
        <name>Fe cation</name>
        <dbReference type="ChEBI" id="CHEBI:24875"/>
        <label>1</label>
    </ligand>
</feature>
<feature type="binding site" evidence="1">
    <location>
        <position position="178"/>
    </location>
    <ligand>
        <name>Fe cation</name>
        <dbReference type="ChEBI" id="CHEBI:24875"/>
        <label>2</label>
    </ligand>
</feature>
<feature type="binding site" evidence="1">
    <location>
        <position position="181"/>
    </location>
    <ligand>
        <name>Fe cation</name>
        <dbReference type="ChEBI" id="CHEBI:24875"/>
        <label>2</label>
    </ligand>
</feature>
<organism>
    <name type="scientific">Pseudomonas fluorescens (strain Pf0-1)</name>
    <dbReference type="NCBI Taxonomy" id="205922"/>
    <lineage>
        <taxon>Bacteria</taxon>
        <taxon>Pseudomonadati</taxon>
        <taxon>Pseudomonadota</taxon>
        <taxon>Gammaproteobacteria</taxon>
        <taxon>Pseudomonadales</taxon>
        <taxon>Pseudomonadaceae</taxon>
        <taxon>Pseudomonas</taxon>
    </lineage>
</organism>
<gene>
    <name evidence="1" type="primary">coq7</name>
    <name type="ordered locus">Pfl01_5108</name>
</gene>
<comment type="function">
    <text evidence="1">Catalyzes the hydroxylation of 2-nonaprenyl-3-methyl-6-methoxy-1,4-benzoquinol during ubiquinone biosynthesis.</text>
</comment>
<comment type="catalytic activity">
    <reaction evidence="1">
        <text>a 5-methoxy-2-methyl-3-(all-trans-polyprenyl)benzene-1,4-diol + AH2 + O2 = a 3-demethylubiquinol + A + H2O</text>
        <dbReference type="Rhea" id="RHEA:50908"/>
        <dbReference type="Rhea" id="RHEA-COMP:10859"/>
        <dbReference type="Rhea" id="RHEA-COMP:10914"/>
        <dbReference type="ChEBI" id="CHEBI:13193"/>
        <dbReference type="ChEBI" id="CHEBI:15377"/>
        <dbReference type="ChEBI" id="CHEBI:15379"/>
        <dbReference type="ChEBI" id="CHEBI:17499"/>
        <dbReference type="ChEBI" id="CHEBI:84167"/>
        <dbReference type="ChEBI" id="CHEBI:84422"/>
        <dbReference type="EC" id="1.14.99.60"/>
    </reaction>
</comment>
<comment type="cofactor">
    <cofactor evidence="1">
        <name>Fe cation</name>
        <dbReference type="ChEBI" id="CHEBI:24875"/>
    </cofactor>
    <text evidence="1">Binds 2 iron ions per subunit.</text>
</comment>
<comment type="pathway">
    <text evidence="1">Cofactor biosynthesis; ubiquinone biosynthesis.</text>
</comment>
<comment type="subcellular location">
    <subcellularLocation>
        <location evidence="1">Cell membrane</location>
        <topology evidence="1">Peripheral membrane protein</topology>
    </subcellularLocation>
</comment>
<comment type="similarity">
    <text evidence="1">Belongs to the COQ7 family.</text>
</comment>
<sequence length="215" mass="23963">MTTQRHYSPIDRLLLQADAAMRTLLPFSGQPYRPSPAIVQPDVQMSDEDIRHVAGLMRINHTGEVCAQALYQGQALTAKLPQVREAMEHAAEEEIDHLVWCEQRIHQLGSHTSVLNPLFYGMSFGIGAVAGLISDKVSLGFVAATEHQVCKHLNEHLEQLPAEDEKSRAILEQMRIDEEHHAESALEAGGFRFPAPVKFGMSLLAKVMTKSTYRI</sequence>
<dbReference type="EC" id="1.14.99.60" evidence="1"/>
<dbReference type="EMBL" id="CP000094">
    <property type="protein sequence ID" value="ABA76845.1"/>
    <property type="molecule type" value="Genomic_DNA"/>
</dbReference>
<dbReference type="RefSeq" id="WP_011336188.1">
    <property type="nucleotide sequence ID" value="NC_007492.2"/>
</dbReference>
<dbReference type="SMR" id="Q3K5V9"/>
<dbReference type="KEGG" id="pfo:Pfl01_5108"/>
<dbReference type="eggNOG" id="COG2941">
    <property type="taxonomic scope" value="Bacteria"/>
</dbReference>
<dbReference type="HOGENOM" id="CLU_088601_0_0_6"/>
<dbReference type="UniPathway" id="UPA00232"/>
<dbReference type="Proteomes" id="UP000002704">
    <property type="component" value="Chromosome"/>
</dbReference>
<dbReference type="GO" id="GO:0005886">
    <property type="term" value="C:plasma membrane"/>
    <property type="evidence" value="ECO:0007669"/>
    <property type="project" value="UniProtKB-SubCell"/>
</dbReference>
<dbReference type="GO" id="GO:0008682">
    <property type="term" value="F:3-demethoxyubiquinol 3-hydroxylase activity"/>
    <property type="evidence" value="ECO:0007669"/>
    <property type="project" value="UniProtKB-EC"/>
</dbReference>
<dbReference type="GO" id="GO:0046872">
    <property type="term" value="F:metal ion binding"/>
    <property type="evidence" value="ECO:0007669"/>
    <property type="project" value="UniProtKB-KW"/>
</dbReference>
<dbReference type="GO" id="GO:0006744">
    <property type="term" value="P:ubiquinone biosynthetic process"/>
    <property type="evidence" value="ECO:0007669"/>
    <property type="project" value="UniProtKB-UniRule"/>
</dbReference>
<dbReference type="CDD" id="cd01042">
    <property type="entry name" value="DMQH"/>
    <property type="match status" value="1"/>
</dbReference>
<dbReference type="FunFam" id="1.20.1260.10:FF:000013">
    <property type="entry name" value="2-nonaprenyl-3-methyl-6-methoxy-1,4-benzoquinol hydroxylase"/>
    <property type="match status" value="1"/>
</dbReference>
<dbReference type="Gene3D" id="1.20.1260.10">
    <property type="match status" value="1"/>
</dbReference>
<dbReference type="HAMAP" id="MF_01658">
    <property type="entry name" value="COQ7"/>
    <property type="match status" value="1"/>
</dbReference>
<dbReference type="InterPro" id="IPR047809">
    <property type="entry name" value="COQ7_proteobact"/>
</dbReference>
<dbReference type="InterPro" id="IPR012347">
    <property type="entry name" value="Ferritin-like"/>
</dbReference>
<dbReference type="InterPro" id="IPR009078">
    <property type="entry name" value="Ferritin-like_SF"/>
</dbReference>
<dbReference type="InterPro" id="IPR011566">
    <property type="entry name" value="Ubq_synth_Coq7"/>
</dbReference>
<dbReference type="NCBIfam" id="NF033656">
    <property type="entry name" value="DMQ_monoox_COQ7"/>
    <property type="match status" value="1"/>
</dbReference>
<dbReference type="PANTHER" id="PTHR11237:SF4">
    <property type="entry name" value="5-DEMETHOXYUBIQUINONE HYDROXYLASE, MITOCHONDRIAL"/>
    <property type="match status" value="1"/>
</dbReference>
<dbReference type="PANTHER" id="PTHR11237">
    <property type="entry name" value="COENZYME Q10 BIOSYNTHESIS PROTEIN 7"/>
    <property type="match status" value="1"/>
</dbReference>
<dbReference type="Pfam" id="PF03232">
    <property type="entry name" value="COQ7"/>
    <property type="match status" value="1"/>
</dbReference>
<dbReference type="SUPFAM" id="SSF47240">
    <property type="entry name" value="Ferritin-like"/>
    <property type="match status" value="1"/>
</dbReference>
<keyword id="KW-1003">Cell membrane</keyword>
<keyword id="KW-0408">Iron</keyword>
<keyword id="KW-0472">Membrane</keyword>
<keyword id="KW-0479">Metal-binding</keyword>
<keyword id="KW-0503">Monooxygenase</keyword>
<keyword id="KW-0560">Oxidoreductase</keyword>
<keyword id="KW-0831">Ubiquinone biosynthesis</keyword>
<proteinExistence type="inferred from homology"/>